<accession>O85227</accession>
<organism>
    <name type="scientific">Pseudomonas protegens (strain DSM 19095 / LMG 27888 / CFBP 6595 / CHA0)</name>
    <dbReference type="NCBI Taxonomy" id="1124983"/>
    <lineage>
        <taxon>Bacteria</taxon>
        <taxon>Pseudomonadati</taxon>
        <taxon>Pseudomonadota</taxon>
        <taxon>Gammaproteobacteria</taxon>
        <taxon>Pseudomonadales</taxon>
        <taxon>Pseudomonadaceae</taxon>
        <taxon>Pseudomonas</taxon>
    </lineage>
</organism>
<name>HCNB_PSEPH</name>
<feature type="chain" id="PRO_0000419812" description="Hydrogen cyanide synthase subunit HcnB">
    <location>
        <begin position="1"/>
        <end position="469"/>
    </location>
</feature>
<comment type="function">
    <text evidence="3 4">A three-component membrane-bound flavoenzyme that catalyzes the formation of hydrogen cyanide, a secondary metabolite, by transfer of electrons to a cyanide-resistant branch of the aerobic respiratory chain. Contributes to suppression of black root rot of tobacco.</text>
</comment>
<comment type="catalytic activity">
    <reaction evidence="1">
        <text>glycine + 2 A = hydrogen cyanide + 2 AH2 + CO2</text>
        <dbReference type="Rhea" id="RHEA:15821"/>
        <dbReference type="ChEBI" id="CHEBI:13193"/>
        <dbReference type="ChEBI" id="CHEBI:16526"/>
        <dbReference type="ChEBI" id="CHEBI:17499"/>
        <dbReference type="ChEBI" id="CHEBI:18407"/>
        <dbReference type="ChEBI" id="CHEBI:57305"/>
        <dbReference type="EC" id="1.4.99.5"/>
    </reaction>
</comment>
<comment type="subunit">
    <text evidence="1">Heterotrimer of HcnA, HcnB and HcnC.</text>
</comment>
<comment type="subcellular location">
    <subcellularLocation>
        <location evidence="1">Cell membrane</location>
    </subcellularLocation>
</comment>
<comment type="induction">
    <text evidence="2 3">Transcriptionally up-regulated by Anr in response to Fe(3+) in oxygen-limiting conditions. Stimulated by glycine.</text>
</comment>
<evidence type="ECO:0000250" key="1">
    <source>
        <dbReference type="UniProtKB" id="G3XD67"/>
    </source>
</evidence>
<evidence type="ECO:0000269" key="2">
    <source>
    </source>
</evidence>
<evidence type="ECO:0000269" key="3">
    <source>
    </source>
</evidence>
<evidence type="ECO:0000269" key="4">
    <source>
    </source>
</evidence>
<evidence type="ECO:0000303" key="5">
    <source>
    </source>
</evidence>
<evidence type="ECO:0000305" key="6"/>
<evidence type="ECO:0000312" key="7">
    <source>
        <dbReference type="EMBL" id="AAC38595.1"/>
    </source>
</evidence>
<gene>
    <name evidence="7" type="primary">hcnB</name>
</gene>
<protein>
    <recommendedName>
        <fullName evidence="7">Hydrogen cyanide synthase subunit HcnB</fullName>
        <shortName evidence="5">HcnB</shortName>
        <ecNumber evidence="1">1.4.99.5</ecNumber>
    </recommendedName>
    <alternativeName>
        <fullName evidence="5">Glycine dehydrogenase (cyanide-forming)</fullName>
    </alternativeName>
</protein>
<keyword id="KW-1003">Cell membrane</keyword>
<keyword id="KW-0472">Membrane</keyword>
<keyword id="KW-0560">Oxidoreductase</keyword>
<sequence length="469" mass="50647">MSLNPVIVGGGPAGMAAAIELAEHGVRSTLIEEASRLGGVVYRGPLRDGVQLDYLGPRYCEMLAKLHGDFADHEQMIDVRLNSRVVGAEGTQSLVLLDGEEQVQQVSYEQLILAAGCHERSVPFPGWTLPGVKLLGGLQLQIKSGVVKPQSPVVIAGTGPLLPLVACQLHASGVRVAGVYEACALGKIAKQSLAMLNKPQLFLDGLSMLAYLKLHGIALRYGWGVVEAQGQDALSVVTVAPYSSDWQPDMAKAQRIAAQTLAVGYGFIPRTQLSQQMGLEHNFSDDGYLRASANAWQQSSEPHVHLAGDMGGIRGGEAAMLSGRIAALSILMQRGVLSNEAALQRRQGYERKLASILRFRGAVDRYTARGAGQVELPKGDTVICRCEHTTRNDIERALSQGVQDMASLKMRTRVSMGDCQGRMCVGYCSDRLRQATGRKDVGWIRPRFPLDPIPFSAFPPSDQEVSQHD</sequence>
<reference evidence="6 7" key="1">
    <citation type="journal article" date="1998" name="J. Bacteriol.">
        <title>Characterization of the hcnABC gene cluster encoding hydrogen cyanide synthase and anaerobic regulation by ANR in the strictly aerobic biocontrol agent Pseudomonas fluorescens CHA0.</title>
        <authorList>
            <person name="Laville J."/>
            <person name="Blumer C."/>
            <person name="Von Schroetter C."/>
            <person name="Gaia V."/>
            <person name="Defago G."/>
            <person name="Keel C."/>
            <person name="Haas D."/>
        </authorList>
    </citation>
    <scope>NUCLEOTIDE SEQUENCE [GENOMIC DNA]</scope>
    <scope>FUNCTION</scope>
    <source>
        <strain>DSM 19095 / LMG 27888 / CFBP 6595 / CHA0</strain>
    </source>
</reference>
<reference evidence="6" key="2">
    <citation type="journal article" date="1989" name="EMBO J.">
        <title>Cyanide production by Pseudomonas fluorescens helps suppress black root rot of tobacco under gnotobiotic conditions.</title>
        <authorList>
            <person name="Voisard C."/>
            <person name="Keel C."/>
            <person name="Haas D."/>
            <person name="Defago G."/>
        </authorList>
    </citation>
    <scope>FUNCTION</scope>
    <scope>INDUCTION</scope>
    <source>
        <strain>DSM 19095 / LMG 27888 / CFBP 6595 / CHA0</strain>
    </source>
</reference>
<reference evidence="6" key="3">
    <citation type="journal article" date="2000" name="Microbiology">
        <title>Iron regulation of the hcnABC genes encoding hydrogen cyanide synthase depends on the anaerobic regulator ANR rather than on the global activator GacA in Pseudomonas fluorescens CHA0.</title>
        <authorList>
            <person name="Blumer C."/>
            <person name="Haas D."/>
        </authorList>
    </citation>
    <scope>INDUCTION</scope>
    <source>
        <strain>DSM 19095 / LMG 27888 / CFBP 6595 / CHA0</strain>
    </source>
</reference>
<proteinExistence type="evidence at transcript level"/>
<dbReference type="EC" id="1.4.99.5" evidence="1"/>
<dbReference type="EMBL" id="AF053760">
    <property type="protein sequence ID" value="AAC38595.1"/>
    <property type="molecule type" value="Genomic_DNA"/>
</dbReference>
<dbReference type="RefSeq" id="WP_011060874.1">
    <property type="nucleotide sequence ID" value="NZ_LS999205.1"/>
</dbReference>
<dbReference type="SMR" id="O85227"/>
<dbReference type="GeneID" id="57475634"/>
<dbReference type="PATRIC" id="fig|1124983.3.peg.2665"/>
<dbReference type="eggNOG" id="COG0446">
    <property type="taxonomic scope" value="Bacteria"/>
</dbReference>
<dbReference type="BioCyc" id="MetaCyc:MONOMER-8124"/>
<dbReference type="GO" id="GO:0005886">
    <property type="term" value="C:plasma membrane"/>
    <property type="evidence" value="ECO:0007669"/>
    <property type="project" value="UniProtKB-SubCell"/>
</dbReference>
<dbReference type="GO" id="GO:0050622">
    <property type="term" value="F:glycine dehydrogenase (cyanide-forming) activity"/>
    <property type="evidence" value="ECO:0007669"/>
    <property type="project" value="UniProtKB-EC"/>
</dbReference>
<dbReference type="CDD" id="cd19946">
    <property type="entry name" value="GlpA-like_Fer2_BFD-like"/>
    <property type="match status" value="1"/>
</dbReference>
<dbReference type="Gene3D" id="1.10.10.1100">
    <property type="entry name" value="BFD-like [2Fe-2S]-binding domain"/>
    <property type="match status" value="1"/>
</dbReference>
<dbReference type="Gene3D" id="3.50.50.60">
    <property type="entry name" value="FAD/NAD(P)-binding domain"/>
    <property type="match status" value="2"/>
</dbReference>
<dbReference type="InterPro" id="IPR007419">
    <property type="entry name" value="BFD-like_2Fe2S-bd_dom"/>
</dbReference>
<dbReference type="InterPro" id="IPR041854">
    <property type="entry name" value="BFD-like_2Fe2S-bd_dom_sf"/>
</dbReference>
<dbReference type="InterPro" id="IPR036188">
    <property type="entry name" value="FAD/NAD-bd_sf"/>
</dbReference>
<dbReference type="InterPro" id="IPR023753">
    <property type="entry name" value="FAD/NAD-binding_dom"/>
</dbReference>
<dbReference type="InterPro" id="IPR051691">
    <property type="entry name" value="Metab_Enz_Cyan_OpOx_G3PDH"/>
</dbReference>
<dbReference type="InterPro" id="IPR017224">
    <property type="entry name" value="Opine_Oxase_asu/HCN_bsu"/>
</dbReference>
<dbReference type="PANTHER" id="PTHR42949">
    <property type="entry name" value="ANAEROBIC GLYCEROL-3-PHOSPHATE DEHYDROGENASE SUBUNIT B"/>
    <property type="match status" value="1"/>
</dbReference>
<dbReference type="PANTHER" id="PTHR42949:SF3">
    <property type="entry name" value="ANAEROBIC GLYCEROL-3-PHOSPHATE DEHYDROGENASE SUBUNIT B"/>
    <property type="match status" value="1"/>
</dbReference>
<dbReference type="Pfam" id="PF04324">
    <property type="entry name" value="Fer2_BFD"/>
    <property type="match status" value="1"/>
</dbReference>
<dbReference type="Pfam" id="PF07992">
    <property type="entry name" value="Pyr_redox_2"/>
    <property type="match status" value="1"/>
</dbReference>
<dbReference type="PIRSF" id="PIRSF037495">
    <property type="entry name" value="Opine_OX_OoxA/HcnB"/>
    <property type="match status" value="1"/>
</dbReference>
<dbReference type="PRINTS" id="PR00368">
    <property type="entry name" value="FADPNR"/>
</dbReference>
<dbReference type="PRINTS" id="PR00469">
    <property type="entry name" value="PNDRDTASEII"/>
</dbReference>
<dbReference type="SUPFAM" id="SSF51905">
    <property type="entry name" value="FAD/NAD(P)-binding domain"/>
    <property type="match status" value="1"/>
</dbReference>